<feature type="chain" id="PRO_1000131870" description="Probable Fe(2+)-trafficking protein">
    <location>
        <begin position="1"/>
        <end position="90"/>
    </location>
</feature>
<name>FETP_ALIFM</name>
<comment type="function">
    <text evidence="1">Could be a mediator in iron transactions between iron acquisition and iron-requiring processes, such as synthesis and/or repair of Fe-S clusters in biosynthetic enzymes.</text>
</comment>
<comment type="similarity">
    <text evidence="1">Belongs to the Fe(2+)-trafficking protein family.</text>
</comment>
<reference key="1">
    <citation type="submission" date="2008-08" db="EMBL/GenBank/DDBJ databases">
        <title>Complete sequence of Vibrio fischeri strain MJ11.</title>
        <authorList>
            <person name="Mandel M.J."/>
            <person name="Stabb E.V."/>
            <person name="Ruby E.G."/>
            <person name="Ferriera S."/>
            <person name="Johnson J."/>
            <person name="Kravitz S."/>
            <person name="Beeson K."/>
            <person name="Sutton G."/>
            <person name="Rogers Y.-H."/>
            <person name="Friedman R."/>
            <person name="Frazier M."/>
            <person name="Venter J.C."/>
        </authorList>
    </citation>
    <scope>NUCLEOTIDE SEQUENCE [LARGE SCALE GENOMIC DNA]</scope>
    <source>
        <strain>MJ11</strain>
    </source>
</reference>
<gene>
    <name type="ordered locus">VFMJ11_0420</name>
</gene>
<keyword id="KW-0408">Iron</keyword>
<evidence type="ECO:0000255" key="1">
    <source>
        <dbReference type="HAMAP-Rule" id="MF_00686"/>
    </source>
</evidence>
<sequence>MSRTVFCVRLNKEADGLDFQLYPGELGKRIFDNISKEAWGQWQHKQTMLINEKKLNMMDPEHRKLLETEMEGFLFDGKDVVIDGYTPPSE</sequence>
<proteinExistence type="inferred from homology"/>
<accession>B5F9R3</accession>
<protein>
    <recommendedName>
        <fullName evidence="1">Probable Fe(2+)-trafficking protein</fullName>
    </recommendedName>
</protein>
<organism>
    <name type="scientific">Aliivibrio fischeri (strain MJ11)</name>
    <name type="common">Vibrio fischeri</name>
    <dbReference type="NCBI Taxonomy" id="388396"/>
    <lineage>
        <taxon>Bacteria</taxon>
        <taxon>Pseudomonadati</taxon>
        <taxon>Pseudomonadota</taxon>
        <taxon>Gammaproteobacteria</taxon>
        <taxon>Vibrionales</taxon>
        <taxon>Vibrionaceae</taxon>
        <taxon>Aliivibrio</taxon>
    </lineage>
</organism>
<dbReference type="EMBL" id="CP001139">
    <property type="protein sequence ID" value="ACH65449.1"/>
    <property type="molecule type" value="Genomic_DNA"/>
</dbReference>
<dbReference type="RefSeq" id="WP_005417551.1">
    <property type="nucleotide sequence ID" value="NC_011184.1"/>
</dbReference>
<dbReference type="SMR" id="B5F9R3"/>
<dbReference type="GeneID" id="54163057"/>
<dbReference type="KEGG" id="vfm:VFMJ11_0420"/>
<dbReference type="HOGENOM" id="CLU_170994_0_0_6"/>
<dbReference type="Proteomes" id="UP000001857">
    <property type="component" value="Chromosome I"/>
</dbReference>
<dbReference type="GO" id="GO:0005829">
    <property type="term" value="C:cytosol"/>
    <property type="evidence" value="ECO:0007669"/>
    <property type="project" value="TreeGrafter"/>
</dbReference>
<dbReference type="GO" id="GO:0005506">
    <property type="term" value="F:iron ion binding"/>
    <property type="evidence" value="ECO:0007669"/>
    <property type="project" value="UniProtKB-UniRule"/>
</dbReference>
<dbReference type="GO" id="GO:0034599">
    <property type="term" value="P:cellular response to oxidative stress"/>
    <property type="evidence" value="ECO:0007669"/>
    <property type="project" value="TreeGrafter"/>
</dbReference>
<dbReference type="FunFam" id="1.10.3880.10:FF:000001">
    <property type="entry name" value="Probable Fe(2+)-trafficking protein"/>
    <property type="match status" value="1"/>
</dbReference>
<dbReference type="Gene3D" id="1.10.3880.10">
    <property type="entry name" value="Fe(II) trafficking protein YggX"/>
    <property type="match status" value="1"/>
</dbReference>
<dbReference type="HAMAP" id="MF_00686">
    <property type="entry name" value="Fe_traffic_YggX"/>
    <property type="match status" value="1"/>
</dbReference>
<dbReference type="InterPro" id="IPR007457">
    <property type="entry name" value="Fe_traffick_prot_YggX"/>
</dbReference>
<dbReference type="InterPro" id="IPR036766">
    <property type="entry name" value="Fe_traffick_prot_YggX_sf"/>
</dbReference>
<dbReference type="NCBIfam" id="NF003817">
    <property type="entry name" value="PRK05408.1"/>
    <property type="match status" value="1"/>
</dbReference>
<dbReference type="PANTHER" id="PTHR36965">
    <property type="entry name" value="FE(2+)-TRAFFICKING PROTEIN-RELATED"/>
    <property type="match status" value="1"/>
</dbReference>
<dbReference type="PANTHER" id="PTHR36965:SF1">
    <property type="entry name" value="FE(2+)-TRAFFICKING PROTEIN-RELATED"/>
    <property type="match status" value="1"/>
</dbReference>
<dbReference type="Pfam" id="PF04362">
    <property type="entry name" value="Iron_traffic"/>
    <property type="match status" value="1"/>
</dbReference>
<dbReference type="PIRSF" id="PIRSF029827">
    <property type="entry name" value="Fe_traffic_YggX"/>
    <property type="match status" value="1"/>
</dbReference>
<dbReference type="SUPFAM" id="SSF111148">
    <property type="entry name" value="YggX-like"/>
    <property type="match status" value="1"/>
</dbReference>